<dbReference type="EC" id="2.5.1.75" evidence="1"/>
<dbReference type="EMBL" id="CP000083">
    <property type="protein sequence ID" value="AAZ28844.1"/>
    <property type="molecule type" value="Genomic_DNA"/>
</dbReference>
<dbReference type="SMR" id="Q48A23"/>
<dbReference type="STRING" id="167879.CPS_0324"/>
<dbReference type="KEGG" id="cps:CPS_0324"/>
<dbReference type="eggNOG" id="COG0324">
    <property type="taxonomic scope" value="Bacteria"/>
</dbReference>
<dbReference type="HOGENOM" id="CLU_032616_0_0_6"/>
<dbReference type="Proteomes" id="UP000000547">
    <property type="component" value="Chromosome"/>
</dbReference>
<dbReference type="GO" id="GO:0005524">
    <property type="term" value="F:ATP binding"/>
    <property type="evidence" value="ECO:0007669"/>
    <property type="project" value="UniProtKB-UniRule"/>
</dbReference>
<dbReference type="GO" id="GO:0052381">
    <property type="term" value="F:tRNA dimethylallyltransferase activity"/>
    <property type="evidence" value="ECO:0007669"/>
    <property type="project" value="UniProtKB-UniRule"/>
</dbReference>
<dbReference type="GO" id="GO:0006400">
    <property type="term" value="P:tRNA modification"/>
    <property type="evidence" value="ECO:0007669"/>
    <property type="project" value="TreeGrafter"/>
</dbReference>
<dbReference type="FunFam" id="1.10.20.140:FF:000001">
    <property type="entry name" value="tRNA dimethylallyltransferase"/>
    <property type="match status" value="1"/>
</dbReference>
<dbReference type="Gene3D" id="1.10.20.140">
    <property type="match status" value="1"/>
</dbReference>
<dbReference type="Gene3D" id="3.40.50.300">
    <property type="entry name" value="P-loop containing nucleotide triphosphate hydrolases"/>
    <property type="match status" value="1"/>
</dbReference>
<dbReference type="HAMAP" id="MF_00185">
    <property type="entry name" value="IPP_trans"/>
    <property type="match status" value="1"/>
</dbReference>
<dbReference type="InterPro" id="IPR039657">
    <property type="entry name" value="Dimethylallyltransferase"/>
</dbReference>
<dbReference type="InterPro" id="IPR018022">
    <property type="entry name" value="IPT"/>
</dbReference>
<dbReference type="InterPro" id="IPR027417">
    <property type="entry name" value="P-loop_NTPase"/>
</dbReference>
<dbReference type="NCBIfam" id="TIGR00174">
    <property type="entry name" value="miaA"/>
    <property type="match status" value="1"/>
</dbReference>
<dbReference type="PANTHER" id="PTHR11088">
    <property type="entry name" value="TRNA DIMETHYLALLYLTRANSFERASE"/>
    <property type="match status" value="1"/>
</dbReference>
<dbReference type="PANTHER" id="PTHR11088:SF60">
    <property type="entry name" value="TRNA DIMETHYLALLYLTRANSFERASE"/>
    <property type="match status" value="1"/>
</dbReference>
<dbReference type="Pfam" id="PF01715">
    <property type="entry name" value="IPPT"/>
    <property type="match status" value="1"/>
</dbReference>
<dbReference type="SUPFAM" id="SSF52540">
    <property type="entry name" value="P-loop containing nucleoside triphosphate hydrolases"/>
    <property type="match status" value="1"/>
</dbReference>
<keyword id="KW-0067">ATP-binding</keyword>
<keyword id="KW-0460">Magnesium</keyword>
<keyword id="KW-0547">Nucleotide-binding</keyword>
<keyword id="KW-0808">Transferase</keyword>
<keyword id="KW-0819">tRNA processing</keyword>
<comment type="function">
    <text evidence="1">Catalyzes the transfer of a dimethylallyl group onto the adenine at position 37 in tRNAs that read codons beginning with uridine, leading to the formation of N6-(dimethylallyl)adenosine (i(6)A).</text>
</comment>
<comment type="catalytic activity">
    <reaction evidence="1">
        <text>adenosine(37) in tRNA + dimethylallyl diphosphate = N(6)-dimethylallyladenosine(37) in tRNA + diphosphate</text>
        <dbReference type="Rhea" id="RHEA:26482"/>
        <dbReference type="Rhea" id="RHEA-COMP:10162"/>
        <dbReference type="Rhea" id="RHEA-COMP:10375"/>
        <dbReference type="ChEBI" id="CHEBI:33019"/>
        <dbReference type="ChEBI" id="CHEBI:57623"/>
        <dbReference type="ChEBI" id="CHEBI:74411"/>
        <dbReference type="ChEBI" id="CHEBI:74415"/>
        <dbReference type="EC" id="2.5.1.75"/>
    </reaction>
</comment>
<comment type="cofactor">
    <cofactor evidence="1">
        <name>Mg(2+)</name>
        <dbReference type="ChEBI" id="CHEBI:18420"/>
    </cofactor>
</comment>
<comment type="subunit">
    <text evidence="1">Monomer.</text>
</comment>
<comment type="similarity">
    <text evidence="1">Belongs to the IPP transferase family.</text>
</comment>
<protein>
    <recommendedName>
        <fullName evidence="1">tRNA dimethylallyltransferase</fullName>
        <ecNumber evidence="1">2.5.1.75</ecNumber>
    </recommendedName>
    <alternativeName>
        <fullName evidence="1">Dimethylallyl diphosphate:tRNA dimethylallyltransferase</fullName>
        <shortName evidence="1">DMAPP:tRNA dimethylallyltransferase</shortName>
        <shortName evidence="1">DMATase</shortName>
    </alternativeName>
    <alternativeName>
        <fullName evidence="1">Isopentenyl-diphosphate:tRNA isopentenyltransferase</fullName>
        <shortName evidence="1">IPP transferase</shortName>
        <shortName evidence="1">IPPT</shortName>
        <shortName evidence="1">IPTase</shortName>
    </alternativeName>
</protein>
<gene>
    <name evidence="1" type="primary">miaA</name>
    <name type="ordered locus">CPS_0324</name>
</gene>
<evidence type="ECO:0000255" key="1">
    <source>
        <dbReference type="HAMAP-Rule" id="MF_00185"/>
    </source>
</evidence>
<accession>Q48A23</accession>
<proteinExistence type="inferred from homology"/>
<organism>
    <name type="scientific">Colwellia psychrerythraea (strain 34H / ATCC BAA-681)</name>
    <name type="common">Vibrio psychroerythus</name>
    <dbReference type="NCBI Taxonomy" id="167879"/>
    <lineage>
        <taxon>Bacteria</taxon>
        <taxon>Pseudomonadati</taxon>
        <taxon>Pseudomonadota</taxon>
        <taxon>Gammaproteobacteria</taxon>
        <taxon>Alteromonadales</taxon>
        <taxon>Colwelliaceae</taxon>
        <taxon>Colwellia</taxon>
    </lineage>
</organism>
<feature type="chain" id="PRO_0000377125" description="tRNA dimethylallyltransferase">
    <location>
        <begin position="1"/>
        <end position="316"/>
    </location>
</feature>
<feature type="region of interest" description="Interaction with substrate tRNA" evidence="1">
    <location>
        <begin position="44"/>
        <end position="47"/>
    </location>
</feature>
<feature type="region of interest" description="Interaction with substrate tRNA" evidence="1">
    <location>
        <begin position="168"/>
        <end position="172"/>
    </location>
</feature>
<feature type="region of interest" description="Interaction with substrate tRNA" evidence="1">
    <location>
        <begin position="249"/>
        <end position="254"/>
    </location>
</feature>
<feature type="binding site" evidence="1">
    <location>
        <begin position="19"/>
        <end position="26"/>
    </location>
    <ligand>
        <name>ATP</name>
        <dbReference type="ChEBI" id="CHEBI:30616"/>
    </ligand>
</feature>
<feature type="binding site" evidence="1">
    <location>
        <begin position="21"/>
        <end position="26"/>
    </location>
    <ligand>
        <name>substrate</name>
    </ligand>
</feature>
<feature type="site" description="Interaction with substrate tRNA" evidence="1">
    <location>
        <position position="110"/>
    </location>
</feature>
<feature type="site" description="Interaction with substrate tRNA" evidence="1">
    <location>
        <position position="132"/>
    </location>
</feature>
<name>MIAA_COLP3</name>
<sequence length="316" mass="35635">MSVQSITESNQPPVICLMGPTASGKTALAMALKDALPCDIVSVDSALIYRDMDIGTAKPTKSELVQYPHRLIDLRDASESYSAADFCRDALVEIAEIRSNGRIPLLVGGTMMYFKSLIEGISPLPTANPEIRQAIEAEALSKGWQAMHDQLAEIDPVSAERIHPNDPQRITRALEVYRLTSNTLTQLTQIKGAKLAGDVLQLAITPRERSTLHERIALRYQQMIDLGFEQEVIKLKSRDDLHQDLPSIRCVGYRQMWQHLEGEFDHDEMIFRGVCATRQLAKRQLTWLRNWPDLHWLTTDDKTNLAQVLSLLEAKH</sequence>
<reference key="1">
    <citation type="journal article" date="2005" name="Proc. Natl. Acad. Sci. U.S.A.">
        <title>The psychrophilic lifestyle as revealed by the genome sequence of Colwellia psychrerythraea 34H through genomic and proteomic analyses.</title>
        <authorList>
            <person name="Methe B.A."/>
            <person name="Nelson K.E."/>
            <person name="Deming J.W."/>
            <person name="Momen B."/>
            <person name="Melamud E."/>
            <person name="Zhang X."/>
            <person name="Moult J."/>
            <person name="Madupu R."/>
            <person name="Nelson W.C."/>
            <person name="Dodson R.J."/>
            <person name="Brinkac L.M."/>
            <person name="Daugherty S.C."/>
            <person name="Durkin A.S."/>
            <person name="DeBoy R.T."/>
            <person name="Kolonay J.F."/>
            <person name="Sullivan S.A."/>
            <person name="Zhou L."/>
            <person name="Davidsen T.M."/>
            <person name="Wu M."/>
            <person name="Huston A.L."/>
            <person name="Lewis M."/>
            <person name="Weaver B."/>
            <person name="Weidman J.F."/>
            <person name="Khouri H."/>
            <person name="Utterback T.R."/>
            <person name="Feldblyum T.V."/>
            <person name="Fraser C.M."/>
        </authorList>
    </citation>
    <scope>NUCLEOTIDE SEQUENCE [LARGE SCALE GENOMIC DNA]</scope>
    <source>
        <strain>34H / ATCC BAA-681</strain>
    </source>
</reference>